<name>ARGR_CLONN</name>
<reference key="1">
    <citation type="journal article" date="2006" name="Nat. Biotechnol.">
        <title>The genome and transcriptomes of the anti-tumor agent Clostridium novyi-NT.</title>
        <authorList>
            <person name="Bettegowda C."/>
            <person name="Huang X."/>
            <person name="Lin J."/>
            <person name="Cheong I."/>
            <person name="Kohli M."/>
            <person name="Szabo S.A."/>
            <person name="Zhang X."/>
            <person name="Diaz L.A. Jr."/>
            <person name="Velculescu V.E."/>
            <person name="Parmigiani G."/>
            <person name="Kinzler K.W."/>
            <person name="Vogelstein B."/>
            <person name="Zhou S."/>
        </authorList>
    </citation>
    <scope>NUCLEOTIDE SEQUENCE [LARGE SCALE GENOMIC DNA]</scope>
    <source>
        <strain>NT</strain>
    </source>
</reference>
<evidence type="ECO:0000255" key="1">
    <source>
        <dbReference type="HAMAP-Rule" id="MF_00173"/>
    </source>
</evidence>
<dbReference type="EMBL" id="CP000382">
    <property type="protein sequence ID" value="ABK61692.1"/>
    <property type="molecule type" value="Genomic_DNA"/>
</dbReference>
<dbReference type="RefSeq" id="WP_011722062.1">
    <property type="nucleotide sequence ID" value="NC_008593.1"/>
</dbReference>
<dbReference type="SMR" id="A0Q0A7"/>
<dbReference type="STRING" id="386415.NT01CX_1986"/>
<dbReference type="KEGG" id="cno:NT01CX_1986"/>
<dbReference type="eggNOG" id="COG1438">
    <property type="taxonomic scope" value="Bacteria"/>
</dbReference>
<dbReference type="HOGENOM" id="CLU_097103_3_0_9"/>
<dbReference type="UniPathway" id="UPA00068"/>
<dbReference type="Proteomes" id="UP000008220">
    <property type="component" value="Chromosome"/>
</dbReference>
<dbReference type="GO" id="GO:0005737">
    <property type="term" value="C:cytoplasm"/>
    <property type="evidence" value="ECO:0007669"/>
    <property type="project" value="UniProtKB-SubCell"/>
</dbReference>
<dbReference type="GO" id="GO:0034618">
    <property type="term" value="F:arginine binding"/>
    <property type="evidence" value="ECO:0007669"/>
    <property type="project" value="InterPro"/>
</dbReference>
<dbReference type="GO" id="GO:0003677">
    <property type="term" value="F:DNA binding"/>
    <property type="evidence" value="ECO:0007669"/>
    <property type="project" value="UniProtKB-KW"/>
</dbReference>
<dbReference type="GO" id="GO:0003700">
    <property type="term" value="F:DNA-binding transcription factor activity"/>
    <property type="evidence" value="ECO:0007669"/>
    <property type="project" value="UniProtKB-UniRule"/>
</dbReference>
<dbReference type="GO" id="GO:0006526">
    <property type="term" value="P:L-arginine biosynthetic process"/>
    <property type="evidence" value="ECO:0007669"/>
    <property type="project" value="UniProtKB-UniPathway"/>
</dbReference>
<dbReference type="GO" id="GO:0051259">
    <property type="term" value="P:protein complex oligomerization"/>
    <property type="evidence" value="ECO:0007669"/>
    <property type="project" value="InterPro"/>
</dbReference>
<dbReference type="GO" id="GO:1900079">
    <property type="term" value="P:regulation of arginine biosynthetic process"/>
    <property type="evidence" value="ECO:0007669"/>
    <property type="project" value="UniProtKB-UniRule"/>
</dbReference>
<dbReference type="Gene3D" id="3.30.1360.40">
    <property type="match status" value="1"/>
</dbReference>
<dbReference type="Gene3D" id="1.10.10.10">
    <property type="entry name" value="Winged helix-like DNA-binding domain superfamily/Winged helix DNA-binding domain"/>
    <property type="match status" value="1"/>
</dbReference>
<dbReference type="HAMAP" id="MF_00173">
    <property type="entry name" value="Arg_repressor"/>
    <property type="match status" value="1"/>
</dbReference>
<dbReference type="InterPro" id="IPR001669">
    <property type="entry name" value="Arg_repress"/>
</dbReference>
<dbReference type="InterPro" id="IPR020899">
    <property type="entry name" value="Arg_repress_C"/>
</dbReference>
<dbReference type="InterPro" id="IPR036251">
    <property type="entry name" value="Arg_repress_C_sf"/>
</dbReference>
<dbReference type="InterPro" id="IPR020900">
    <property type="entry name" value="Arg_repress_DNA-bd"/>
</dbReference>
<dbReference type="InterPro" id="IPR036388">
    <property type="entry name" value="WH-like_DNA-bd_sf"/>
</dbReference>
<dbReference type="InterPro" id="IPR036390">
    <property type="entry name" value="WH_DNA-bd_sf"/>
</dbReference>
<dbReference type="NCBIfam" id="TIGR01529">
    <property type="entry name" value="argR_whole"/>
    <property type="match status" value="1"/>
</dbReference>
<dbReference type="NCBIfam" id="NF001680">
    <property type="entry name" value="PRK00441.1"/>
    <property type="match status" value="1"/>
</dbReference>
<dbReference type="PANTHER" id="PTHR34471">
    <property type="entry name" value="ARGININE REPRESSOR"/>
    <property type="match status" value="1"/>
</dbReference>
<dbReference type="PANTHER" id="PTHR34471:SF1">
    <property type="entry name" value="ARGININE REPRESSOR"/>
    <property type="match status" value="1"/>
</dbReference>
<dbReference type="Pfam" id="PF01316">
    <property type="entry name" value="Arg_repressor"/>
    <property type="match status" value="1"/>
</dbReference>
<dbReference type="Pfam" id="PF02863">
    <property type="entry name" value="Arg_repressor_C"/>
    <property type="match status" value="1"/>
</dbReference>
<dbReference type="PRINTS" id="PR01467">
    <property type="entry name" value="ARGREPRESSOR"/>
</dbReference>
<dbReference type="SUPFAM" id="SSF55252">
    <property type="entry name" value="C-terminal domain of arginine repressor"/>
    <property type="match status" value="1"/>
</dbReference>
<dbReference type="SUPFAM" id="SSF46785">
    <property type="entry name" value="Winged helix' DNA-binding domain"/>
    <property type="match status" value="1"/>
</dbReference>
<organism>
    <name type="scientific">Clostridium novyi (strain NT)</name>
    <dbReference type="NCBI Taxonomy" id="386415"/>
    <lineage>
        <taxon>Bacteria</taxon>
        <taxon>Bacillati</taxon>
        <taxon>Bacillota</taxon>
        <taxon>Clostridia</taxon>
        <taxon>Eubacteriales</taxon>
        <taxon>Clostridiaceae</taxon>
        <taxon>Clostridium</taxon>
    </lineage>
</organism>
<keyword id="KW-0028">Amino-acid biosynthesis</keyword>
<keyword id="KW-0055">Arginine biosynthesis</keyword>
<keyword id="KW-0963">Cytoplasm</keyword>
<keyword id="KW-0238">DNA-binding</keyword>
<keyword id="KW-1185">Reference proteome</keyword>
<keyword id="KW-0678">Repressor</keyword>
<keyword id="KW-0804">Transcription</keyword>
<keyword id="KW-0805">Transcription regulation</keyword>
<gene>
    <name evidence="1" type="primary">argR</name>
    <name type="ordered locus">NT01CX_1986</name>
</gene>
<accession>A0Q0A7</accession>
<protein>
    <recommendedName>
        <fullName evidence="1">Arginine repressor</fullName>
    </recommendedName>
</protein>
<proteinExistence type="inferred from homology"/>
<feature type="chain" id="PRO_1000023558" description="Arginine repressor">
    <location>
        <begin position="1"/>
        <end position="151"/>
    </location>
</feature>
<sequence>MKIQRHSKILEIINTKDVETQEELAEELKKRGVDVTQATVSRDIKELKLIKVLSENGRYKYATIAKSDGLLANKLVNVFSNTVISVENVQNFVVVKTLSGSGSAAAESIDSMNFDGIAGTIAGDNTIFILTINENKAEEIVKKLKKMLENK</sequence>
<comment type="function">
    <text evidence="1">Regulates arginine biosynthesis genes.</text>
</comment>
<comment type="pathway">
    <text>Amino-acid biosynthesis; L-arginine biosynthesis [regulation].</text>
</comment>
<comment type="subcellular location">
    <subcellularLocation>
        <location evidence="1">Cytoplasm</location>
    </subcellularLocation>
</comment>
<comment type="similarity">
    <text evidence="1">Belongs to the ArgR family.</text>
</comment>